<protein>
    <recommendedName>
        <fullName>Basic endochitinase C</fullName>
        <ecNumber>3.2.1.14</ecNumber>
    </recommendedName>
    <alternativeName>
        <fullName>Rye seed chitinase-c</fullName>
        <shortName>RSC-c</shortName>
    </alternativeName>
</protein>
<feature type="signal peptide" evidence="3 5 6">
    <location>
        <begin position="1"/>
        <end position="23"/>
    </location>
</feature>
<feature type="chain" id="PRO_0000042671" description="Basic endochitinase C" evidence="3">
    <location>
        <begin position="24"/>
        <end position="266"/>
    </location>
</feature>
<feature type="active site" description="Proton donor" evidence="1">
    <location>
        <position position="90"/>
    </location>
</feature>
<feature type="site" description="May be involved in substrate-binding" evidence="8">
    <location>
        <position position="95"/>
    </location>
</feature>
<feature type="site" description="May be involved in substrate-binding" evidence="7">
    <location>
        <position position="118"/>
    </location>
</feature>
<feature type="disulfide bond" evidence="6">
    <location>
        <begin position="46"/>
        <end position="108"/>
    </location>
</feature>
<feature type="disulfide bond" evidence="6">
    <location>
        <begin position="120"/>
        <end position="128"/>
    </location>
</feature>
<feature type="disulfide bond" evidence="6">
    <location>
        <begin position="246"/>
        <end position="259"/>
    </location>
</feature>
<feature type="mutagenesis site" description="Abolishes chitinase activity." evidence="3">
    <original>E</original>
    <variation>Q</variation>
    <location>
        <position position="90"/>
    </location>
</feature>
<feature type="mutagenesis site" description="Chitinase activity is reduced to 51.2% of wild-type. Decreased anti-fungal activity." evidence="3">
    <original>W</original>
    <variation>A</variation>
    <location>
        <position position="95"/>
    </location>
</feature>
<feature type="mutagenesis site" description="Chitinase activity is reduced to 0.33% of wild-type. Decreased anti-fungal activity." evidence="3">
    <original>E</original>
    <variation>Q</variation>
    <location>
        <position position="112"/>
    </location>
</feature>
<feature type="mutagenesis site" description="Chitinase activity is reduced to 79% of wild-type. Decreased anti-fungal activity." evidence="3">
    <original>D</original>
    <variation>A</variation>
    <location>
        <position position="118"/>
    </location>
</feature>
<feature type="mutagenesis site" description="Chitinase activity is reduced to 1.2% of wild-type. Decreased anti-fungal activity." evidence="3">
    <original>S</original>
    <variation>A</variation>
    <location>
        <position position="143"/>
    </location>
</feature>
<feature type="helix" evidence="11">
    <location>
        <begin position="25"/>
        <end position="27"/>
    </location>
</feature>
<feature type="helix" evidence="11">
    <location>
        <begin position="31"/>
        <end position="37"/>
    </location>
</feature>
<feature type="turn" evidence="11">
    <location>
        <begin position="38"/>
        <end position="42"/>
    </location>
</feature>
<feature type="turn" evidence="11">
    <location>
        <begin position="47"/>
        <end position="51"/>
    </location>
</feature>
<feature type="helix" evidence="11">
    <location>
        <begin position="54"/>
        <end position="62"/>
    </location>
</feature>
<feature type="turn" evidence="11">
    <location>
        <begin position="65"/>
        <end position="68"/>
    </location>
</feature>
<feature type="strand" evidence="11">
    <location>
        <begin position="69"/>
        <end position="72"/>
    </location>
</feature>
<feature type="helix" evidence="11">
    <location>
        <begin position="73"/>
        <end position="90"/>
    </location>
</feature>
<feature type="helix" evidence="11">
    <location>
        <begin position="102"/>
        <end position="104"/>
    </location>
</feature>
<feature type="strand" evidence="11">
    <location>
        <begin position="113"/>
        <end position="115"/>
    </location>
</feature>
<feature type="strand" evidence="11">
    <location>
        <begin position="123"/>
        <end position="126"/>
    </location>
</feature>
<feature type="turn" evidence="11">
    <location>
        <begin position="138"/>
        <end position="141"/>
    </location>
</feature>
<feature type="helix" evidence="11">
    <location>
        <begin position="145"/>
        <end position="155"/>
    </location>
</feature>
<feature type="turn" evidence="11">
    <location>
        <begin position="159"/>
        <end position="161"/>
    </location>
</feature>
<feature type="helix" evidence="11">
    <location>
        <begin position="165"/>
        <end position="168"/>
    </location>
</feature>
<feature type="helix" evidence="11">
    <location>
        <begin position="170"/>
        <end position="182"/>
    </location>
</feature>
<feature type="helix" evidence="11">
    <location>
        <begin position="191"/>
        <end position="195"/>
    </location>
</feature>
<feature type="helix" evidence="11">
    <location>
        <begin position="203"/>
        <end position="208"/>
    </location>
</feature>
<feature type="helix" evidence="11">
    <location>
        <begin position="214"/>
        <end position="226"/>
    </location>
</feature>
<feature type="strand" evidence="11">
    <location>
        <begin position="227"/>
        <end position="230"/>
    </location>
</feature>
<feature type="helix" evidence="11">
    <location>
        <begin position="233"/>
        <end position="249"/>
    </location>
</feature>
<organism>
    <name type="scientific">Secale cereale</name>
    <name type="common">Rye</name>
    <dbReference type="NCBI Taxonomy" id="4550"/>
    <lineage>
        <taxon>Eukaryota</taxon>
        <taxon>Viridiplantae</taxon>
        <taxon>Streptophyta</taxon>
        <taxon>Embryophyta</taxon>
        <taxon>Tracheophyta</taxon>
        <taxon>Spermatophyta</taxon>
        <taxon>Magnoliopsida</taxon>
        <taxon>Liliopsida</taxon>
        <taxon>Poales</taxon>
        <taxon>Poaceae</taxon>
        <taxon>BOP clade</taxon>
        <taxon>Pooideae</taxon>
        <taxon>Triticodae</taxon>
        <taxon>Triticeae</taxon>
        <taxon>Hordeinae</taxon>
        <taxon>Secale</taxon>
    </lineage>
</organism>
<keyword id="KW-0002">3D-structure</keyword>
<keyword id="KW-0929">Antimicrobial</keyword>
<keyword id="KW-0119">Carbohydrate metabolism</keyword>
<keyword id="KW-0146">Chitin degradation</keyword>
<keyword id="KW-0147">Chitin-binding</keyword>
<keyword id="KW-0903">Direct protein sequencing</keyword>
<keyword id="KW-1015">Disulfide bond</keyword>
<keyword id="KW-0295">Fungicide</keyword>
<keyword id="KW-0326">Glycosidase</keyword>
<keyword id="KW-0378">Hydrolase</keyword>
<keyword id="KW-0611">Plant defense</keyword>
<keyword id="KW-0624">Polysaccharide degradation</keyword>
<keyword id="KW-0732">Signal</keyword>
<name>CHIC_SECCE</name>
<reference evidence="9 10" key="1">
    <citation type="journal article" date="2002" name="Biosci. Biotechnol. Biochem.">
        <title>Molecular cloning, functional expression, and mutagenesis of cDNA encoding rye (Secale cereale) seed chitinase-c.</title>
        <authorList>
            <person name="Ohnuma T."/>
            <person name="Yagi M."/>
            <person name="Yamagami T."/>
            <person name="Taira T."/>
            <person name="Aso Y."/>
            <person name="Ishiguro M."/>
        </authorList>
    </citation>
    <scope>NUCLEOTIDE SEQUENCE [MRNA]</scope>
    <scope>PROTEIN SEQUENCE OF 24-28</scope>
    <scope>FUNCTION</scope>
    <scope>CATALYTIC ACTIVITY</scope>
    <scope>MUTAGENESIS OF GLU-90; TRP-95; GLU-112; ASP-118 AND SER-143</scope>
    <source>
        <tissue evidence="3">Seed</tissue>
    </source>
</reference>
<reference evidence="9" key="2">
    <citation type="journal article" date="1993" name="Biosci. Biotechnol. Biochem.">
        <title>The complete amino acid sequence of chitinase-c from the seeds of rye (Secale cereal).</title>
        <authorList>
            <person name="Yamagami T."/>
            <person name="Funatsu G."/>
        </authorList>
    </citation>
    <scope>PROTEIN SEQUENCE OF 24-266</scope>
    <scope>DISULFIDE BONDS</scope>
    <source>
        <tissue evidence="6">Seed</tissue>
    </source>
</reference>
<reference evidence="9" key="3">
    <citation type="journal article" date="1993" name="Biosci. Biotechnol. Biochem.">
        <title>Purification and some properties of three chitinases from the seeds of rye (Secale cereale).</title>
        <authorList>
            <person name="Yamagami T."/>
            <person name="Funatsu G."/>
        </authorList>
    </citation>
    <scope>PROTEIN SEQUENCE OF 24-30</scope>
    <scope>CATALYTIC ACTIVITY</scope>
    <scope>BIOPHYSICOCHEMICAL PROPERTIES</scope>
</reference>
<reference evidence="9" key="4">
    <citation type="journal article" date="1998" name="Biosci. Biotechnol. Biochem.">
        <title>Identification of the aspartic acid residue located at or near substrate-binding site of rye seed chitinase-c.</title>
        <authorList>
            <person name="Yamagami T."/>
            <person name="Funatsu G."/>
        </authorList>
    </citation>
    <scope>PROTEIN SEQUENCE OF 114-133 AND 254-260</scope>
    <scope>ROLE OF ASP-118 IN SUBSTRATE BINDING</scope>
</reference>
<reference evidence="9" key="5">
    <citation type="journal article" date="1995" name="Biosci. Biotechnol. Biochem.">
        <title>Identification of the tryptophan residue located at the substrate-binding site of rye seed chitinase-c.</title>
        <authorList>
            <person name="Yamagami T."/>
            <person name="Funatsu G."/>
        </authorList>
    </citation>
    <scope>ROLE OF TRP-95 IN SUBSTRATE BINDING</scope>
</reference>
<reference evidence="9" key="6">
    <citation type="journal article" date="2001" name="Biosci. Biotechnol. Biochem.">
        <title>Localization, accumulation, and antifungal activity of chitinases in rye (Secale cereale) seed.</title>
        <authorList>
            <person name="Taira T."/>
            <person name="Yamagami T."/>
            <person name="Aso Y."/>
            <person name="Ishiguro M."/>
            <person name="Ishihara M."/>
        </authorList>
    </citation>
    <scope>FUNCTION</scope>
    <scope>TISSUE SPECIFICITY</scope>
    <scope>DEVELOPMENTAL STAGE</scope>
</reference>
<reference evidence="9" key="7">
    <citation type="journal article" date="2002" name="Biosci. Biotechnol. Biochem.">
        <title>Antifungal activity of rye (Secale cereale) seed chitinases: the different binding manner of class I and class II chitinases to the fungal cell walls.</title>
        <authorList>
            <person name="Taira T."/>
            <person name="Ohnuma T."/>
            <person name="Yamagami T."/>
            <person name="Aso Y."/>
            <person name="Ishiguro M."/>
            <person name="Ishihara M."/>
        </authorList>
    </citation>
    <scope>FUNCTION</scope>
</reference>
<proteinExistence type="evidence at protein level"/>
<sequence>MRSLAVVVAVVATVAMAIGTAHGSVSSIISHAQFDRMLLHRNDGACQAKGFYTYDAFVAAANAFPGFGATGSTDARKRDVAAFLAQTSHETTGGWATAPDGAFAWGYCFKQERGAAADYCTPSAQWPCAPGKRYYGRGPIQLSHNYNYGPAGRAIGVDLLRNPDLVATDPTVSFKTALWFWMTAQAPKPSSHAVITGKWSPSGADRAAGRAPGFGVITNIINGGLECGHGQDSRVADRIGFYKRYCDILGVGYGDNLDCYNQRPFA</sequence>
<evidence type="ECO:0000250" key="1">
    <source>
        <dbReference type="UniProtKB" id="P29022"/>
    </source>
</evidence>
<evidence type="ECO:0000269" key="2">
    <source>
    </source>
</evidence>
<evidence type="ECO:0000269" key="3">
    <source>
    </source>
</evidence>
<evidence type="ECO:0000269" key="4">
    <source>
    </source>
</evidence>
<evidence type="ECO:0000269" key="5">
    <source>
    </source>
</evidence>
<evidence type="ECO:0000269" key="6">
    <source>
    </source>
</evidence>
<evidence type="ECO:0000269" key="7">
    <source>
    </source>
</evidence>
<evidence type="ECO:0000269" key="8">
    <source ref="5"/>
</evidence>
<evidence type="ECO:0000305" key="9"/>
<evidence type="ECO:0000312" key="10">
    <source>
        <dbReference type="EMBL" id="BAB18520.1"/>
    </source>
</evidence>
<evidence type="ECO:0007829" key="11">
    <source>
        <dbReference type="PDB" id="4DYG"/>
    </source>
</evidence>
<comment type="function">
    <text evidence="2 3 4">Defense against chitin-containing fungal pathogens. Binds the hyphal tips of fungi and degrades nascent chitin.</text>
</comment>
<comment type="catalytic activity">
    <reaction evidence="3 5">
        <text>Random endo-hydrolysis of N-acetyl-beta-D-glucosaminide (1-&gt;4)-beta-linkages in chitin and chitodextrins.</text>
        <dbReference type="EC" id="3.2.1.14"/>
    </reaction>
</comment>
<comment type="biophysicochemical properties">
    <phDependence>
        <text evidence="5">Optimum pH is about 5.0. Stable between pH 4-8.</text>
    </phDependence>
    <temperatureDependence>
        <text evidence="5">Enzyme activity is retained almost fully under 40 degrees Celsius and completely destroyed at 70 degrees Celsius. At 60 degrees Celsius the activity was 15-30% compared to the untreated enzyme.</text>
    </temperatureDependence>
</comment>
<comment type="tissue specificity">
    <text evidence="2">Localized to the starchy endoderm of the seed May localize to other parts of the seed including the aleurone cells (at protein level).</text>
</comment>
<comment type="developmental stage">
    <text evidence="2">Levels increase from 23 to 40 days after flowering, and are maintained until maturation (at protein level).</text>
</comment>
<comment type="similarity">
    <text evidence="3 9">Belongs to the glycosyl hydrolase 19 family. Chitinase class II subfamily.</text>
</comment>
<gene>
    <name evidence="10" type="primary">rscc</name>
</gene>
<dbReference type="EC" id="3.2.1.14"/>
<dbReference type="EMBL" id="AB051579">
    <property type="protein sequence ID" value="BAB18520.1"/>
    <property type="molecule type" value="mRNA"/>
</dbReference>
<dbReference type="PIR" id="JC7816">
    <property type="entry name" value="JC7816"/>
</dbReference>
<dbReference type="PIR" id="JN0884">
    <property type="entry name" value="JN0884"/>
</dbReference>
<dbReference type="PDB" id="4DWX">
    <property type="method" value="X-ray"/>
    <property type="resolution" value="1.80 A"/>
    <property type="chains" value="A/B=24-266"/>
</dbReference>
<dbReference type="PDB" id="4DYG">
    <property type="method" value="X-ray"/>
    <property type="resolution" value="1.70 A"/>
    <property type="chains" value="A/B=24-266"/>
</dbReference>
<dbReference type="PDB" id="4J0L">
    <property type="method" value="X-ray"/>
    <property type="resolution" value="1.90 A"/>
    <property type="chains" value="A=24-266"/>
</dbReference>
<dbReference type="PDBsum" id="4DWX"/>
<dbReference type="PDBsum" id="4DYG"/>
<dbReference type="PDBsum" id="4J0L"/>
<dbReference type="BMRB" id="Q9FRV0"/>
<dbReference type="SMR" id="Q9FRV0"/>
<dbReference type="MINT" id="Q9FRV0"/>
<dbReference type="CAZy" id="GH19">
    <property type="family name" value="Glycoside Hydrolase Family 19"/>
</dbReference>
<dbReference type="EvolutionaryTrace" id="Q9FRV0"/>
<dbReference type="GO" id="GO:0005576">
    <property type="term" value="C:extracellular region"/>
    <property type="evidence" value="ECO:0000305"/>
    <property type="project" value="UniProtKB"/>
</dbReference>
<dbReference type="GO" id="GO:0008061">
    <property type="term" value="F:chitin binding"/>
    <property type="evidence" value="ECO:0007669"/>
    <property type="project" value="UniProtKB-KW"/>
</dbReference>
<dbReference type="GO" id="GO:0004568">
    <property type="term" value="F:chitinase activity"/>
    <property type="evidence" value="ECO:0000314"/>
    <property type="project" value="UniProtKB"/>
</dbReference>
<dbReference type="GO" id="GO:0008843">
    <property type="term" value="F:endochitinase activity"/>
    <property type="evidence" value="ECO:0007669"/>
    <property type="project" value="UniProtKB-EC"/>
</dbReference>
<dbReference type="GO" id="GO:0016998">
    <property type="term" value="P:cell wall macromolecule catabolic process"/>
    <property type="evidence" value="ECO:0000314"/>
    <property type="project" value="UniProtKB"/>
</dbReference>
<dbReference type="GO" id="GO:0006032">
    <property type="term" value="P:chitin catabolic process"/>
    <property type="evidence" value="ECO:0007669"/>
    <property type="project" value="UniProtKB-KW"/>
</dbReference>
<dbReference type="GO" id="GO:0050832">
    <property type="term" value="P:defense response to fungus"/>
    <property type="evidence" value="ECO:0000314"/>
    <property type="project" value="UniProtKB"/>
</dbReference>
<dbReference type="GO" id="GO:0031640">
    <property type="term" value="P:killing of cells of another organism"/>
    <property type="evidence" value="ECO:0007669"/>
    <property type="project" value="UniProtKB-KW"/>
</dbReference>
<dbReference type="GO" id="GO:0000272">
    <property type="term" value="P:polysaccharide catabolic process"/>
    <property type="evidence" value="ECO:0007669"/>
    <property type="project" value="UniProtKB-KW"/>
</dbReference>
<dbReference type="CDD" id="cd00325">
    <property type="entry name" value="chitinase_GH19"/>
    <property type="match status" value="1"/>
</dbReference>
<dbReference type="FunFam" id="3.30.20.10:FF:000001">
    <property type="entry name" value="Endochitinase (Chitinase)"/>
    <property type="match status" value="1"/>
</dbReference>
<dbReference type="Gene3D" id="1.10.530.10">
    <property type="match status" value="1"/>
</dbReference>
<dbReference type="Gene3D" id="3.30.20.10">
    <property type="entry name" value="Endochitinase, domain 2"/>
    <property type="match status" value="1"/>
</dbReference>
<dbReference type="InterPro" id="IPR016283">
    <property type="entry name" value="Glyco_hydro_19"/>
</dbReference>
<dbReference type="InterPro" id="IPR000726">
    <property type="entry name" value="Glyco_hydro_19_cat"/>
</dbReference>
<dbReference type="InterPro" id="IPR023346">
    <property type="entry name" value="Lysozyme-like_dom_sf"/>
</dbReference>
<dbReference type="PANTHER" id="PTHR22595:SF127">
    <property type="entry name" value="CHITINASE"/>
    <property type="match status" value="1"/>
</dbReference>
<dbReference type="PANTHER" id="PTHR22595">
    <property type="entry name" value="CHITINASE-RELATED"/>
    <property type="match status" value="1"/>
</dbReference>
<dbReference type="Pfam" id="PF00182">
    <property type="entry name" value="Glyco_hydro_19"/>
    <property type="match status" value="1"/>
</dbReference>
<dbReference type="PIRSF" id="PIRSF001060">
    <property type="entry name" value="Endochitinase"/>
    <property type="match status" value="1"/>
</dbReference>
<dbReference type="SUPFAM" id="SSF53955">
    <property type="entry name" value="Lysozyme-like"/>
    <property type="match status" value="1"/>
</dbReference>
<dbReference type="PROSITE" id="PS00773">
    <property type="entry name" value="CHITINASE_19_1"/>
    <property type="match status" value="1"/>
</dbReference>
<dbReference type="PROSITE" id="PS00774">
    <property type="entry name" value="CHITINASE_19_2"/>
    <property type="match status" value="1"/>
</dbReference>
<accession>Q9FRV0</accession>